<reference key="1">
    <citation type="journal article" date="2003" name="J. Bacteriol.">
        <title>Comparative genomics of Salmonella enterica serovar Typhi strains Ty2 and CT18.</title>
        <authorList>
            <person name="Deng W."/>
            <person name="Liou S.-R."/>
            <person name="Plunkett G. III"/>
            <person name="Mayhew G.F."/>
            <person name="Rose D.J."/>
            <person name="Burland V."/>
            <person name="Kodoyianni V."/>
            <person name="Schwartz D.C."/>
            <person name="Blattner F.R."/>
        </authorList>
    </citation>
    <scope>NUCLEOTIDE SEQUENCE [LARGE SCALE GENOMIC DNA]</scope>
    <source>
        <strain>ATCC 700931 / Ty2</strain>
    </source>
</reference>
<reference key="2">
    <citation type="journal article" date="2001" name="Nature">
        <title>Complete genome sequence of a multiple drug resistant Salmonella enterica serovar Typhi CT18.</title>
        <authorList>
            <person name="Parkhill J."/>
            <person name="Dougan G."/>
            <person name="James K.D."/>
            <person name="Thomson N.R."/>
            <person name="Pickard D."/>
            <person name="Wain J."/>
            <person name="Churcher C.M."/>
            <person name="Mungall K.L."/>
            <person name="Bentley S.D."/>
            <person name="Holden M.T.G."/>
            <person name="Sebaihia M."/>
            <person name="Baker S."/>
            <person name="Basham D."/>
            <person name="Brooks K."/>
            <person name="Chillingworth T."/>
            <person name="Connerton P."/>
            <person name="Cronin A."/>
            <person name="Davis P."/>
            <person name="Davies R.M."/>
            <person name="Dowd L."/>
            <person name="White N."/>
            <person name="Farrar J."/>
            <person name="Feltwell T."/>
            <person name="Hamlin N."/>
            <person name="Haque A."/>
            <person name="Hien T.T."/>
            <person name="Holroyd S."/>
            <person name="Jagels K."/>
            <person name="Krogh A."/>
            <person name="Larsen T.S."/>
            <person name="Leather S."/>
            <person name="Moule S."/>
            <person name="O'Gaora P."/>
            <person name="Parry C."/>
            <person name="Quail M.A."/>
            <person name="Rutherford K.M."/>
            <person name="Simmonds M."/>
            <person name="Skelton J."/>
            <person name="Stevens K."/>
            <person name="Whitehead S."/>
            <person name="Barrell B.G."/>
        </authorList>
    </citation>
    <scope>NUCLEOTIDE SEQUENCE [LARGE SCALE GENOMIC DNA]</scope>
    <source>
        <strain>CT18</strain>
    </source>
</reference>
<accession>P60655</accession>
<accession>Q8XG05</accession>
<gene>
    <name evidence="1" type="primary">speB</name>
    <name type="ordered locus">STY3238</name>
    <name type="ordered locus">t2998</name>
</gene>
<feature type="chain" id="PRO_0000173741" description="Agmatinase">
    <location>
        <begin position="1"/>
        <end position="306"/>
    </location>
</feature>
<feature type="binding site" evidence="1">
    <location>
        <position position="126"/>
    </location>
    <ligand>
        <name>Mn(2+)</name>
        <dbReference type="ChEBI" id="CHEBI:29035"/>
    </ligand>
</feature>
<feature type="binding site" evidence="1">
    <location>
        <position position="149"/>
    </location>
    <ligand>
        <name>Mn(2+)</name>
        <dbReference type="ChEBI" id="CHEBI:29035"/>
    </ligand>
</feature>
<feature type="binding site" evidence="1">
    <location>
        <position position="151"/>
    </location>
    <ligand>
        <name>Mn(2+)</name>
        <dbReference type="ChEBI" id="CHEBI:29035"/>
    </ligand>
</feature>
<feature type="binding site" evidence="1">
    <location>
        <position position="153"/>
    </location>
    <ligand>
        <name>Mn(2+)</name>
        <dbReference type="ChEBI" id="CHEBI:29035"/>
    </ligand>
</feature>
<feature type="binding site" evidence="1">
    <location>
        <position position="230"/>
    </location>
    <ligand>
        <name>Mn(2+)</name>
        <dbReference type="ChEBI" id="CHEBI:29035"/>
    </ligand>
</feature>
<feature type="binding site" evidence="1">
    <location>
        <position position="232"/>
    </location>
    <ligand>
        <name>Mn(2+)</name>
        <dbReference type="ChEBI" id="CHEBI:29035"/>
    </ligand>
</feature>
<sequence>MSTLGHQYDNSLVSNAFGFLRLPMNFQPYDSDADWVITGVPFDMATSGRAGGRHGPAAIRQVSTNLAWEHHRFPWNFDMRERLNVVDCGDLVYAFGDAREMSEKLQAHAEKLLSAGKRMLSFGGDHFVTLPLLRAHAKHFGKMALVHFDAHTDTYANGCEFDHGTMFYTAPKEGLIDPHHSVQIGIRTEFDKDNGFTVLDACQVNDRGVDDILAQVKQIVGDMPVYLTFDIDCLDPAFAPGTGTPVIGGLTSDRAIKLVRGLKDLNIVGMDVVEVAPAYDQSEITALAAATLALEMLYIQAAKKGE</sequence>
<evidence type="ECO:0000255" key="1">
    <source>
        <dbReference type="HAMAP-Rule" id="MF_01418"/>
    </source>
</evidence>
<name>SPEB_SALTI</name>
<organism>
    <name type="scientific">Salmonella typhi</name>
    <dbReference type="NCBI Taxonomy" id="90370"/>
    <lineage>
        <taxon>Bacteria</taxon>
        <taxon>Pseudomonadati</taxon>
        <taxon>Pseudomonadota</taxon>
        <taxon>Gammaproteobacteria</taxon>
        <taxon>Enterobacterales</taxon>
        <taxon>Enterobacteriaceae</taxon>
        <taxon>Salmonella</taxon>
    </lineage>
</organism>
<keyword id="KW-0378">Hydrolase</keyword>
<keyword id="KW-0464">Manganese</keyword>
<keyword id="KW-0479">Metal-binding</keyword>
<keyword id="KW-0620">Polyamine biosynthesis</keyword>
<keyword id="KW-0661">Putrescine biosynthesis</keyword>
<keyword id="KW-0745">Spermidine biosynthesis</keyword>
<comment type="function">
    <text evidence="1">Catalyzes the formation of putrescine from agmatine.</text>
</comment>
<comment type="catalytic activity">
    <reaction evidence="1">
        <text>agmatine + H2O = urea + putrescine</text>
        <dbReference type="Rhea" id="RHEA:13929"/>
        <dbReference type="ChEBI" id="CHEBI:15377"/>
        <dbReference type="ChEBI" id="CHEBI:16199"/>
        <dbReference type="ChEBI" id="CHEBI:58145"/>
        <dbReference type="ChEBI" id="CHEBI:326268"/>
        <dbReference type="EC" id="3.5.3.11"/>
    </reaction>
</comment>
<comment type="cofactor">
    <cofactor evidence="1">
        <name>Mn(2+)</name>
        <dbReference type="ChEBI" id="CHEBI:29035"/>
    </cofactor>
</comment>
<comment type="pathway">
    <text evidence="1">Amine and polyamine biosynthesis; putrescine biosynthesis via agmatine pathway; putrescine from agmatine: step 1/1.</text>
</comment>
<comment type="similarity">
    <text evidence="1">Belongs to the arginase family. Agmatinase subfamily.</text>
</comment>
<proteinExistence type="inferred from homology"/>
<dbReference type="EC" id="3.5.3.11" evidence="1"/>
<dbReference type="EMBL" id="AE014613">
    <property type="protein sequence ID" value="AAO70550.1"/>
    <property type="molecule type" value="Genomic_DNA"/>
</dbReference>
<dbReference type="EMBL" id="AL513382">
    <property type="protein sequence ID" value="CAD02910.1"/>
    <property type="molecule type" value="Genomic_DNA"/>
</dbReference>
<dbReference type="RefSeq" id="NP_457478.1">
    <property type="nucleotide sequence ID" value="NC_003198.1"/>
</dbReference>
<dbReference type="RefSeq" id="WP_000105550.1">
    <property type="nucleotide sequence ID" value="NZ_WSUR01000049.1"/>
</dbReference>
<dbReference type="SMR" id="P60655"/>
<dbReference type="STRING" id="220341.gene:17587112"/>
<dbReference type="KEGG" id="stt:t2998"/>
<dbReference type="KEGG" id="sty:STY3238"/>
<dbReference type="PATRIC" id="fig|220341.7.peg.3301"/>
<dbReference type="eggNOG" id="COG0010">
    <property type="taxonomic scope" value="Bacteria"/>
</dbReference>
<dbReference type="HOGENOM" id="CLU_039478_0_0_6"/>
<dbReference type="OMA" id="YELTTIM"/>
<dbReference type="OrthoDB" id="9789727at2"/>
<dbReference type="UniPathway" id="UPA00534">
    <property type="reaction ID" value="UER00287"/>
</dbReference>
<dbReference type="Proteomes" id="UP000000541">
    <property type="component" value="Chromosome"/>
</dbReference>
<dbReference type="Proteomes" id="UP000002670">
    <property type="component" value="Chromosome"/>
</dbReference>
<dbReference type="GO" id="GO:0008783">
    <property type="term" value="F:agmatinase activity"/>
    <property type="evidence" value="ECO:0007669"/>
    <property type="project" value="UniProtKB-UniRule"/>
</dbReference>
<dbReference type="GO" id="GO:0030145">
    <property type="term" value="F:manganese ion binding"/>
    <property type="evidence" value="ECO:0007669"/>
    <property type="project" value="InterPro"/>
</dbReference>
<dbReference type="GO" id="GO:0033389">
    <property type="term" value="P:putrescine biosynthetic process from arginine, via agmatine"/>
    <property type="evidence" value="ECO:0007669"/>
    <property type="project" value="TreeGrafter"/>
</dbReference>
<dbReference type="GO" id="GO:0008295">
    <property type="term" value="P:spermidine biosynthetic process"/>
    <property type="evidence" value="ECO:0007669"/>
    <property type="project" value="UniProtKB-UniRule"/>
</dbReference>
<dbReference type="CDD" id="cd11592">
    <property type="entry name" value="Agmatinase_PAH"/>
    <property type="match status" value="1"/>
</dbReference>
<dbReference type="FunFam" id="3.40.800.10:FF:000001">
    <property type="entry name" value="Agmatinase"/>
    <property type="match status" value="1"/>
</dbReference>
<dbReference type="Gene3D" id="3.40.800.10">
    <property type="entry name" value="Ureohydrolase domain"/>
    <property type="match status" value="1"/>
</dbReference>
<dbReference type="HAMAP" id="MF_01418">
    <property type="entry name" value="SpeB"/>
    <property type="match status" value="1"/>
</dbReference>
<dbReference type="InterPro" id="IPR023694">
    <property type="entry name" value="Agmatinase"/>
</dbReference>
<dbReference type="InterPro" id="IPR005925">
    <property type="entry name" value="Agmatinase-rel"/>
</dbReference>
<dbReference type="InterPro" id="IPR006035">
    <property type="entry name" value="Ureohydrolase"/>
</dbReference>
<dbReference type="InterPro" id="IPR023696">
    <property type="entry name" value="Ureohydrolase_dom_sf"/>
</dbReference>
<dbReference type="InterPro" id="IPR020855">
    <property type="entry name" value="Ureohydrolase_Mn_BS"/>
</dbReference>
<dbReference type="NCBIfam" id="TIGR01230">
    <property type="entry name" value="agmatinase"/>
    <property type="match status" value="1"/>
</dbReference>
<dbReference type="NCBIfam" id="NF002564">
    <property type="entry name" value="PRK02190.1"/>
    <property type="match status" value="1"/>
</dbReference>
<dbReference type="PANTHER" id="PTHR11358">
    <property type="entry name" value="ARGINASE/AGMATINASE"/>
    <property type="match status" value="1"/>
</dbReference>
<dbReference type="PANTHER" id="PTHR11358:SF26">
    <property type="entry name" value="GUANIDINO ACID HYDROLASE, MITOCHONDRIAL"/>
    <property type="match status" value="1"/>
</dbReference>
<dbReference type="Pfam" id="PF00491">
    <property type="entry name" value="Arginase"/>
    <property type="match status" value="1"/>
</dbReference>
<dbReference type="PIRSF" id="PIRSF036979">
    <property type="entry name" value="Arginase"/>
    <property type="match status" value="1"/>
</dbReference>
<dbReference type="SUPFAM" id="SSF52768">
    <property type="entry name" value="Arginase/deacetylase"/>
    <property type="match status" value="1"/>
</dbReference>
<dbReference type="PROSITE" id="PS01053">
    <property type="entry name" value="ARGINASE_1"/>
    <property type="match status" value="1"/>
</dbReference>
<dbReference type="PROSITE" id="PS51409">
    <property type="entry name" value="ARGINASE_2"/>
    <property type="match status" value="1"/>
</dbReference>
<protein>
    <recommendedName>
        <fullName evidence="1">Agmatinase</fullName>
        <ecNumber evidence="1">3.5.3.11</ecNumber>
    </recommendedName>
    <alternativeName>
        <fullName evidence="1">Agmatine ureohydrolase</fullName>
        <shortName evidence="1">AUH</shortName>
    </alternativeName>
</protein>